<name>PURA_FRATW</name>
<dbReference type="EC" id="6.3.4.4" evidence="1"/>
<dbReference type="EMBL" id="CP000608">
    <property type="protein sequence ID" value="ABO47539.1"/>
    <property type="molecule type" value="Genomic_DNA"/>
</dbReference>
<dbReference type="RefSeq" id="WP_003013911.1">
    <property type="nucleotide sequence ID" value="NC_009257.1"/>
</dbReference>
<dbReference type="SMR" id="A4J037"/>
<dbReference type="KEGG" id="ftw:FTW_1884"/>
<dbReference type="HOGENOM" id="CLU_029848_0_0_6"/>
<dbReference type="UniPathway" id="UPA00075">
    <property type="reaction ID" value="UER00335"/>
</dbReference>
<dbReference type="GO" id="GO:0005737">
    <property type="term" value="C:cytoplasm"/>
    <property type="evidence" value="ECO:0007669"/>
    <property type="project" value="UniProtKB-SubCell"/>
</dbReference>
<dbReference type="GO" id="GO:0004019">
    <property type="term" value="F:adenylosuccinate synthase activity"/>
    <property type="evidence" value="ECO:0007669"/>
    <property type="project" value="UniProtKB-UniRule"/>
</dbReference>
<dbReference type="GO" id="GO:0005525">
    <property type="term" value="F:GTP binding"/>
    <property type="evidence" value="ECO:0007669"/>
    <property type="project" value="UniProtKB-UniRule"/>
</dbReference>
<dbReference type="GO" id="GO:0000287">
    <property type="term" value="F:magnesium ion binding"/>
    <property type="evidence" value="ECO:0007669"/>
    <property type="project" value="UniProtKB-UniRule"/>
</dbReference>
<dbReference type="GO" id="GO:0044208">
    <property type="term" value="P:'de novo' AMP biosynthetic process"/>
    <property type="evidence" value="ECO:0007669"/>
    <property type="project" value="UniProtKB-UniRule"/>
</dbReference>
<dbReference type="GO" id="GO:0046040">
    <property type="term" value="P:IMP metabolic process"/>
    <property type="evidence" value="ECO:0007669"/>
    <property type="project" value="TreeGrafter"/>
</dbReference>
<dbReference type="CDD" id="cd03108">
    <property type="entry name" value="AdSS"/>
    <property type="match status" value="1"/>
</dbReference>
<dbReference type="FunFam" id="1.10.300.10:FF:000001">
    <property type="entry name" value="Adenylosuccinate synthetase"/>
    <property type="match status" value="1"/>
</dbReference>
<dbReference type="FunFam" id="3.90.170.10:FF:000001">
    <property type="entry name" value="Adenylosuccinate synthetase"/>
    <property type="match status" value="1"/>
</dbReference>
<dbReference type="Gene3D" id="3.40.440.10">
    <property type="entry name" value="Adenylosuccinate Synthetase, subunit A, domain 1"/>
    <property type="match status" value="1"/>
</dbReference>
<dbReference type="Gene3D" id="1.10.300.10">
    <property type="entry name" value="Adenylosuccinate Synthetase, subunit A, domain 2"/>
    <property type="match status" value="1"/>
</dbReference>
<dbReference type="Gene3D" id="3.90.170.10">
    <property type="entry name" value="Adenylosuccinate Synthetase, subunit A, domain 3"/>
    <property type="match status" value="1"/>
</dbReference>
<dbReference type="HAMAP" id="MF_00011">
    <property type="entry name" value="Adenylosucc_synth"/>
    <property type="match status" value="1"/>
</dbReference>
<dbReference type="InterPro" id="IPR018220">
    <property type="entry name" value="Adenylosuccin_syn_GTP-bd"/>
</dbReference>
<dbReference type="InterPro" id="IPR033128">
    <property type="entry name" value="Adenylosuccin_syn_Lys_AS"/>
</dbReference>
<dbReference type="InterPro" id="IPR042109">
    <property type="entry name" value="Adenylosuccinate_synth_dom1"/>
</dbReference>
<dbReference type="InterPro" id="IPR042110">
    <property type="entry name" value="Adenylosuccinate_synth_dom2"/>
</dbReference>
<dbReference type="InterPro" id="IPR042111">
    <property type="entry name" value="Adenylosuccinate_synth_dom3"/>
</dbReference>
<dbReference type="InterPro" id="IPR001114">
    <property type="entry name" value="Adenylosuccinate_synthetase"/>
</dbReference>
<dbReference type="InterPro" id="IPR027417">
    <property type="entry name" value="P-loop_NTPase"/>
</dbReference>
<dbReference type="NCBIfam" id="NF002223">
    <property type="entry name" value="PRK01117.1"/>
    <property type="match status" value="1"/>
</dbReference>
<dbReference type="NCBIfam" id="TIGR00184">
    <property type="entry name" value="purA"/>
    <property type="match status" value="1"/>
</dbReference>
<dbReference type="PANTHER" id="PTHR11846">
    <property type="entry name" value="ADENYLOSUCCINATE SYNTHETASE"/>
    <property type="match status" value="1"/>
</dbReference>
<dbReference type="PANTHER" id="PTHR11846:SF0">
    <property type="entry name" value="ADENYLOSUCCINATE SYNTHETASE"/>
    <property type="match status" value="1"/>
</dbReference>
<dbReference type="Pfam" id="PF00709">
    <property type="entry name" value="Adenylsucc_synt"/>
    <property type="match status" value="1"/>
</dbReference>
<dbReference type="SMART" id="SM00788">
    <property type="entry name" value="Adenylsucc_synt"/>
    <property type="match status" value="1"/>
</dbReference>
<dbReference type="SUPFAM" id="SSF52540">
    <property type="entry name" value="P-loop containing nucleoside triphosphate hydrolases"/>
    <property type="match status" value="1"/>
</dbReference>
<dbReference type="PROSITE" id="PS01266">
    <property type="entry name" value="ADENYLOSUCCIN_SYN_1"/>
    <property type="match status" value="1"/>
</dbReference>
<dbReference type="PROSITE" id="PS00513">
    <property type="entry name" value="ADENYLOSUCCIN_SYN_2"/>
    <property type="match status" value="1"/>
</dbReference>
<keyword id="KW-0963">Cytoplasm</keyword>
<keyword id="KW-0342">GTP-binding</keyword>
<keyword id="KW-0436">Ligase</keyword>
<keyword id="KW-0460">Magnesium</keyword>
<keyword id="KW-0479">Metal-binding</keyword>
<keyword id="KW-0547">Nucleotide-binding</keyword>
<keyword id="KW-0658">Purine biosynthesis</keyword>
<sequence length="428" mass="46880">MSNIVIVGAQWGDEGKGKIADTLAEKADLVVRYQGGNNAGHTLVVNGKKTFLHLIPSGVLHQHTKCVIGHGVVLDPVALDEEITRLQAKGIAISAENLFVSESCTIITSYHKLLDAVRESNTSEKIGTTGKGIGPAYEDKVSRKGIKFKHLFDKDLLRSRLAISLAEKETLFRDLYKVEYPTLEQEFDKLFALGQKLKQYAADTFSIIDQAIAAGKNVVYEGAQGVLLDVDYGTYPFVTSSNTSVAGVYSGATTAGHGLDHVIGITKAYTTRVGEGPFPTELFDDVGKFIQHKGGEIGVTTGRIRRCGWLDLPLLKYSAKCSNLTSIALTKVDVLSDMDTLKVCIGYKYEGKEIYCAYPGIDLYKVEPILVEMEPFSIDETVTKDNMPAALKTYLKTIENHVGIPISSLAYGPSREQILFFEDYFKKG</sequence>
<gene>
    <name evidence="1" type="primary">purA</name>
    <name type="ordered locus">FTW_1884</name>
</gene>
<protein>
    <recommendedName>
        <fullName evidence="1">Adenylosuccinate synthetase</fullName>
        <shortName evidence="1">AMPSase</shortName>
        <shortName evidence="1">AdSS</shortName>
        <ecNumber evidence="1">6.3.4.4</ecNumber>
    </recommendedName>
    <alternativeName>
        <fullName evidence="1">IMP--aspartate ligase</fullName>
    </alternativeName>
</protein>
<evidence type="ECO:0000255" key="1">
    <source>
        <dbReference type="HAMAP-Rule" id="MF_00011"/>
    </source>
</evidence>
<comment type="function">
    <text evidence="1">Plays an important role in the de novo pathway of purine nucleotide biosynthesis. Catalyzes the first committed step in the biosynthesis of AMP from IMP.</text>
</comment>
<comment type="catalytic activity">
    <reaction evidence="1">
        <text>IMP + L-aspartate + GTP = N(6)-(1,2-dicarboxyethyl)-AMP + GDP + phosphate + 2 H(+)</text>
        <dbReference type="Rhea" id="RHEA:15753"/>
        <dbReference type="ChEBI" id="CHEBI:15378"/>
        <dbReference type="ChEBI" id="CHEBI:29991"/>
        <dbReference type="ChEBI" id="CHEBI:37565"/>
        <dbReference type="ChEBI" id="CHEBI:43474"/>
        <dbReference type="ChEBI" id="CHEBI:57567"/>
        <dbReference type="ChEBI" id="CHEBI:58053"/>
        <dbReference type="ChEBI" id="CHEBI:58189"/>
        <dbReference type="EC" id="6.3.4.4"/>
    </reaction>
</comment>
<comment type="cofactor">
    <cofactor evidence="1">
        <name>Mg(2+)</name>
        <dbReference type="ChEBI" id="CHEBI:18420"/>
    </cofactor>
    <text evidence="1">Binds 1 Mg(2+) ion per subunit.</text>
</comment>
<comment type="pathway">
    <text evidence="1">Purine metabolism; AMP biosynthesis via de novo pathway; AMP from IMP: step 1/2.</text>
</comment>
<comment type="subunit">
    <text evidence="1">Homodimer.</text>
</comment>
<comment type="subcellular location">
    <subcellularLocation>
        <location evidence="1">Cytoplasm</location>
    </subcellularLocation>
</comment>
<comment type="similarity">
    <text evidence="1">Belongs to the adenylosuccinate synthetase family.</text>
</comment>
<proteinExistence type="inferred from homology"/>
<accession>A4J037</accession>
<organism>
    <name type="scientific">Francisella tularensis subsp. tularensis (strain WY96-3418)</name>
    <dbReference type="NCBI Taxonomy" id="418136"/>
    <lineage>
        <taxon>Bacteria</taxon>
        <taxon>Pseudomonadati</taxon>
        <taxon>Pseudomonadota</taxon>
        <taxon>Gammaproteobacteria</taxon>
        <taxon>Thiotrichales</taxon>
        <taxon>Francisellaceae</taxon>
        <taxon>Francisella</taxon>
    </lineage>
</organism>
<feature type="chain" id="PRO_1000000827" description="Adenylosuccinate synthetase">
    <location>
        <begin position="1"/>
        <end position="428"/>
    </location>
</feature>
<feature type="active site" description="Proton acceptor" evidence="1">
    <location>
        <position position="13"/>
    </location>
</feature>
<feature type="active site" description="Proton donor" evidence="1">
    <location>
        <position position="41"/>
    </location>
</feature>
<feature type="binding site" evidence="1">
    <location>
        <begin position="12"/>
        <end position="18"/>
    </location>
    <ligand>
        <name>GTP</name>
        <dbReference type="ChEBI" id="CHEBI:37565"/>
    </ligand>
</feature>
<feature type="binding site" description="in other chain" evidence="1">
    <location>
        <begin position="13"/>
        <end position="16"/>
    </location>
    <ligand>
        <name>IMP</name>
        <dbReference type="ChEBI" id="CHEBI:58053"/>
        <note>ligand shared between dimeric partners</note>
    </ligand>
</feature>
<feature type="binding site" evidence="1">
    <location>
        <position position="13"/>
    </location>
    <ligand>
        <name>Mg(2+)</name>
        <dbReference type="ChEBI" id="CHEBI:18420"/>
    </ligand>
</feature>
<feature type="binding site" description="in other chain" evidence="1">
    <location>
        <begin position="38"/>
        <end position="41"/>
    </location>
    <ligand>
        <name>IMP</name>
        <dbReference type="ChEBI" id="CHEBI:58053"/>
        <note>ligand shared between dimeric partners</note>
    </ligand>
</feature>
<feature type="binding site" evidence="1">
    <location>
        <begin position="40"/>
        <end position="42"/>
    </location>
    <ligand>
        <name>GTP</name>
        <dbReference type="ChEBI" id="CHEBI:37565"/>
    </ligand>
</feature>
<feature type="binding site" evidence="1">
    <location>
        <position position="40"/>
    </location>
    <ligand>
        <name>Mg(2+)</name>
        <dbReference type="ChEBI" id="CHEBI:18420"/>
    </ligand>
</feature>
<feature type="binding site" description="in other chain" evidence="1">
    <location>
        <position position="129"/>
    </location>
    <ligand>
        <name>IMP</name>
        <dbReference type="ChEBI" id="CHEBI:58053"/>
        <note>ligand shared between dimeric partners</note>
    </ligand>
</feature>
<feature type="binding site" evidence="1">
    <location>
        <position position="143"/>
    </location>
    <ligand>
        <name>IMP</name>
        <dbReference type="ChEBI" id="CHEBI:58053"/>
        <note>ligand shared between dimeric partners</note>
    </ligand>
</feature>
<feature type="binding site" description="in other chain" evidence="1">
    <location>
        <position position="224"/>
    </location>
    <ligand>
        <name>IMP</name>
        <dbReference type="ChEBI" id="CHEBI:58053"/>
        <note>ligand shared between dimeric partners</note>
    </ligand>
</feature>
<feature type="binding site" description="in other chain" evidence="1">
    <location>
        <position position="239"/>
    </location>
    <ligand>
        <name>IMP</name>
        <dbReference type="ChEBI" id="CHEBI:58053"/>
        <note>ligand shared between dimeric partners</note>
    </ligand>
</feature>
<feature type="binding site" evidence="1">
    <location>
        <begin position="299"/>
        <end position="305"/>
    </location>
    <ligand>
        <name>substrate</name>
    </ligand>
</feature>
<feature type="binding site" description="in other chain" evidence="1">
    <location>
        <position position="303"/>
    </location>
    <ligand>
        <name>IMP</name>
        <dbReference type="ChEBI" id="CHEBI:58053"/>
        <note>ligand shared between dimeric partners</note>
    </ligand>
</feature>
<feature type="binding site" evidence="1">
    <location>
        <position position="305"/>
    </location>
    <ligand>
        <name>GTP</name>
        <dbReference type="ChEBI" id="CHEBI:37565"/>
    </ligand>
</feature>
<feature type="binding site" evidence="1">
    <location>
        <begin position="331"/>
        <end position="333"/>
    </location>
    <ligand>
        <name>GTP</name>
        <dbReference type="ChEBI" id="CHEBI:37565"/>
    </ligand>
</feature>
<feature type="binding site" evidence="1">
    <location>
        <begin position="410"/>
        <end position="412"/>
    </location>
    <ligand>
        <name>GTP</name>
        <dbReference type="ChEBI" id="CHEBI:37565"/>
    </ligand>
</feature>
<reference key="1">
    <citation type="journal article" date="2007" name="PLoS ONE">
        <title>Complete genomic characterization of a pathogenic A.II strain of Francisella tularensis subspecies tularensis.</title>
        <authorList>
            <person name="Beckstrom-Sternberg S.M."/>
            <person name="Auerbach R.K."/>
            <person name="Godbole S."/>
            <person name="Pearson J.V."/>
            <person name="Beckstrom-Sternberg J.S."/>
            <person name="Deng Z."/>
            <person name="Munk C."/>
            <person name="Kubota K."/>
            <person name="Zhou Y."/>
            <person name="Bruce D."/>
            <person name="Noronha J."/>
            <person name="Scheuermann R.H."/>
            <person name="Wang A."/>
            <person name="Wei X."/>
            <person name="Wang J."/>
            <person name="Hao J."/>
            <person name="Wagner D.M."/>
            <person name="Brettin T.S."/>
            <person name="Brown N."/>
            <person name="Gilna P."/>
            <person name="Keim P.S."/>
        </authorList>
    </citation>
    <scope>NUCLEOTIDE SEQUENCE [LARGE SCALE GENOMIC DNA]</scope>
    <source>
        <strain>WY96-3418</strain>
    </source>
</reference>